<name>METE_ALIF1</name>
<keyword id="KW-0028">Amino-acid biosynthesis</keyword>
<keyword id="KW-0479">Metal-binding</keyword>
<keyword id="KW-0486">Methionine biosynthesis</keyword>
<keyword id="KW-0489">Methyltransferase</keyword>
<keyword id="KW-1185">Reference proteome</keyword>
<keyword id="KW-0677">Repeat</keyword>
<keyword id="KW-0808">Transferase</keyword>
<keyword id="KW-0862">Zinc</keyword>
<organism>
    <name type="scientific">Aliivibrio fischeri (strain ATCC 700601 / ES114)</name>
    <name type="common">Vibrio fischeri</name>
    <dbReference type="NCBI Taxonomy" id="312309"/>
    <lineage>
        <taxon>Bacteria</taxon>
        <taxon>Pseudomonadati</taxon>
        <taxon>Pseudomonadota</taxon>
        <taxon>Gammaproteobacteria</taxon>
        <taxon>Vibrionales</taxon>
        <taxon>Vibrionaceae</taxon>
        <taxon>Aliivibrio</taxon>
    </lineage>
</organism>
<feature type="chain" id="PRO_1000017291" description="5-methyltetrahydropteroyltriglutamate--homocysteine methyltransferase">
    <location>
        <begin position="1"/>
        <end position="774"/>
    </location>
</feature>
<feature type="active site" description="Proton donor" evidence="1">
    <location>
        <position position="709"/>
    </location>
</feature>
<feature type="binding site" evidence="1">
    <location>
        <begin position="23"/>
        <end position="26"/>
    </location>
    <ligand>
        <name>5-methyltetrahydropteroyltri-L-glutamate</name>
        <dbReference type="ChEBI" id="CHEBI:58207"/>
    </ligand>
</feature>
<feature type="binding site" evidence="1">
    <location>
        <position position="123"/>
    </location>
    <ligand>
        <name>5-methyltetrahydropteroyltri-L-glutamate</name>
        <dbReference type="ChEBI" id="CHEBI:58207"/>
    </ligand>
</feature>
<feature type="binding site" evidence="1">
    <location>
        <begin position="446"/>
        <end position="448"/>
    </location>
    <ligand>
        <name>L-homocysteine</name>
        <dbReference type="ChEBI" id="CHEBI:58199"/>
    </ligand>
</feature>
<feature type="binding site" evidence="1">
    <location>
        <begin position="446"/>
        <end position="448"/>
    </location>
    <ligand>
        <name>L-methionine</name>
        <dbReference type="ChEBI" id="CHEBI:57844"/>
    </ligand>
</feature>
<feature type="binding site" evidence="1">
    <location>
        <position position="499"/>
    </location>
    <ligand>
        <name>L-homocysteine</name>
        <dbReference type="ChEBI" id="CHEBI:58199"/>
    </ligand>
</feature>
<feature type="binding site" evidence="1">
    <location>
        <position position="499"/>
    </location>
    <ligand>
        <name>L-methionine</name>
        <dbReference type="ChEBI" id="CHEBI:57844"/>
    </ligand>
</feature>
<feature type="binding site" evidence="1">
    <location>
        <begin position="530"/>
        <end position="531"/>
    </location>
    <ligand>
        <name>5-methyltetrahydropteroyltri-L-glutamate</name>
        <dbReference type="ChEBI" id="CHEBI:58207"/>
    </ligand>
</feature>
<feature type="binding site" evidence="1">
    <location>
        <position position="576"/>
    </location>
    <ligand>
        <name>5-methyltetrahydropteroyltri-L-glutamate</name>
        <dbReference type="ChEBI" id="CHEBI:58207"/>
    </ligand>
</feature>
<feature type="binding site" evidence="1">
    <location>
        <position position="614"/>
    </location>
    <ligand>
        <name>L-homocysteine</name>
        <dbReference type="ChEBI" id="CHEBI:58199"/>
    </ligand>
</feature>
<feature type="binding site" evidence="1">
    <location>
        <position position="614"/>
    </location>
    <ligand>
        <name>L-methionine</name>
        <dbReference type="ChEBI" id="CHEBI:57844"/>
    </ligand>
</feature>
<feature type="binding site" evidence="1">
    <location>
        <position position="620"/>
    </location>
    <ligand>
        <name>5-methyltetrahydropteroyltri-L-glutamate</name>
        <dbReference type="ChEBI" id="CHEBI:58207"/>
    </ligand>
</feature>
<feature type="binding site" evidence="1">
    <location>
        <position position="656"/>
    </location>
    <ligand>
        <name>Zn(2+)</name>
        <dbReference type="ChEBI" id="CHEBI:29105"/>
        <note>catalytic</note>
    </ligand>
</feature>
<feature type="binding site" evidence="1">
    <location>
        <position position="658"/>
    </location>
    <ligand>
        <name>Zn(2+)</name>
        <dbReference type="ChEBI" id="CHEBI:29105"/>
        <note>catalytic</note>
    </ligand>
</feature>
<feature type="binding site" evidence="1">
    <location>
        <position position="680"/>
    </location>
    <ligand>
        <name>Zn(2+)</name>
        <dbReference type="ChEBI" id="CHEBI:29105"/>
        <note>catalytic</note>
    </ligand>
</feature>
<feature type="binding site" evidence="1">
    <location>
        <position position="741"/>
    </location>
    <ligand>
        <name>Zn(2+)</name>
        <dbReference type="ChEBI" id="CHEBI:29105"/>
        <note>catalytic</note>
    </ligand>
</feature>
<proteinExistence type="inferred from homology"/>
<comment type="function">
    <text evidence="1">Catalyzes the transfer of a methyl group from 5-methyltetrahydrofolate to homocysteine resulting in methionine formation.</text>
</comment>
<comment type="catalytic activity">
    <reaction evidence="1">
        <text>5-methyltetrahydropteroyltri-L-glutamate + L-homocysteine = tetrahydropteroyltri-L-glutamate + L-methionine</text>
        <dbReference type="Rhea" id="RHEA:21196"/>
        <dbReference type="ChEBI" id="CHEBI:57844"/>
        <dbReference type="ChEBI" id="CHEBI:58140"/>
        <dbReference type="ChEBI" id="CHEBI:58199"/>
        <dbReference type="ChEBI" id="CHEBI:58207"/>
        <dbReference type="EC" id="2.1.1.14"/>
    </reaction>
</comment>
<comment type="cofactor">
    <cofactor evidence="1">
        <name>Zn(2+)</name>
        <dbReference type="ChEBI" id="CHEBI:29105"/>
    </cofactor>
    <text evidence="1">Binds 1 zinc ion per subunit.</text>
</comment>
<comment type="pathway">
    <text evidence="1">Amino-acid biosynthesis; L-methionine biosynthesis via de novo pathway; L-methionine from L-homocysteine (MetE route): step 1/1.</text>
</comment>
<comment type="similarity">
    <text evidence="1">Belongs to the vitamin-B12 independent methionine synthase family.</text>
</comment>
<sequence length="774" mass="87094">MTTESKTKTVTHILGYPRVGAQRELKFAQEKYWRGEIEQKELLAVGSELRQRHWKDQSASGLDFVTAGDFAWYDHVLTTSLLLGHVPARHNNGFPDLDTLFKVGRGQSQNSCGCGEAASDMTKWFNTNYHYIVPEFSKNDKFNVSWSQLFDEIAEAQKQGHNVKPVLLGPLSYLWLGKEVNDEEVEQGFDRLSLLPRLLTAYQAIFSKLSALGVEWVQIDEPILALELPKAWADSFKLAYQVIQSDVKLLLTTYFDGVEHHLDKITKLAVNGLHIDVSAAPDQLDAIVSALPKEWVLSVGAVNGRNVWRADLERLHERLQPVKEALGDKLWIASSCSLLHSPVDLDQETELSKETLQWFAFAKQKLREVTLLADALDGNQNAILACHQYSQPLRERESAEHINKPAVQQRLAAITPALAERAEAYSVRAQHQAEKLGLPLLPTTTIGSFPQTSDIRQQRSAYRTGKLNEQDYVTAMKGHIADAVERQERLDLDVLVHGEAERNDMVEYFAENLNGFQATRFGWVQSYGSRCVKPAIVVADIEREAPITVSWTQYAQSLTTKQMKGMLTGPVTILGWTFPREDITRKEIAQQLALVLRDEVSDLQQAGINIIQIDEPAIREGLPIKKSDQKAYLDWAVEAFKISAASAKSETQIHTHMCYSEFNEIIESVAALDADVITIETSRSNMELLKAFEDFNYPNEIGPGVYDIHSPNIPSQEWIVDLIETAAARVPVERLWVNPDCGLKTRNWKETEAALENMVKAAKALRKKWQSNAA</sequence>
<gene>
    <name evidence="1" type="primary">metE</name>
    <name type="ordered locus">VF_1721</name>
</gene>
<accession>Q5E430</accession>
<evidence type="ECO:0000255" key="1">
    <source>
        <dbReference type="HAMAP-Rule" id="MF_00172"/>
    </source>
</evidence>
<dbReference type="EC" id="2.1.1.14" evidence="1"/>
<dbReference type="EMBL" id="CP000020">
    <property type="protein sequence ID" value="AAW86216.1"/>
    <property type="molecule type" value="Genomic_DNA"/>
</dbReference>
<dbReference type="RefSeq" id="WP_011262272.1">
    <property type="nucleotide sequence ID" value="NC_006840.2"/>
</dbReference>
<dbReference type="RefSeq" id="YP_205104.1">
    <property type="nucleotide sequence ID" value="NC_006840.2"/>
</dbReference>
<dbReference type="SMR" id="Q5E430"/>
<dbReference type="STRING" id="312309.VF_1721"/>
<dbReference type="EnsemblBacteria" id="AAW86216">
    <property type="protein sequence ID" value="AAW86216"/>
    <property type="gene ID" value="VF_1721"/>
</dbReference>
<dbReference type="GeneID" id="54164417"/>
<dbReference type="KEGG" id="vfi:VF_1721"/>
<dbReference type="PATRIC" id="fig|312309.11.peg.1745"/>
<dbReference type="eggNOG" id="COG0620">
    <property type="taxonomic scope" value="Bacteria"/>
</dbReference>
<dbReference type="HOGENOM" id="CLU_013175_0_0_6"/>
<dbReference type="OrthoDB" id="244285at2"/>
<dbReference type="UniPathway" id="UPA00051">
    <property type="reaction ID" value="UER00082"/>
</dbReference>
<dbReference type="Proteomes" id="UP000000537">
    <property type="component" value="Chromosome I"/>
</dbReference>
<dbReference type="GO" id="GO:0003871">
    <property type="term" value="F:5-methyltetrahydropteroyltriglutamate-homocysteine S-methyltransferase activity"/>
    <property type="evidence" value="ECO:0007669"/>
    <property type="project" value="UniProtKB-UniRule"/>
</dbReference>
<dbReference type="GO" id="GO:0008270">
    <property type="term" value="F:zinc ion binding"/>
    <property type="evidence" value="ECO:0007669"/>
    <property type="project" value="InterPro"/>
</dbReference>
<dbReference type="GO" id="GO:0009086">
    <property type="term" value="P:methionine biosynthetic process"/>
    <property type="evidence" value="ECO:0007669"/>
    <property type="project" value="UniProtKB-UniRule"/>
</dbReference>
<dbReference type="GO" id="GO:0032259">
    <property type="term" value="P:methylation"/>
    <property type="evidence" value="ECO:0007669"/>
    <property type="project" value="UniProtKB-KW"/>
</dbReference>
<dbReference type="CDD" id="cd03311">
    <property type="entry name" value="CIMS_C_terminal_like"/>
    <property type="match status" value="1"/>
</dbReference>
<dbReference type="CDD" id="cd03312">
    <property type="entry name" value="CIMS_N_terminal_like"/>
    <property type="match status" value="1"/>
</dbReference>
<dbReference type="FunFam" id="3.20.20.210:FF:000002">
    <property type="entry name" value="5-methyltetrahydropteroyltriglutamate--homocysteine methyltransferase"/>
    <property type="match status" value="1"/>
</dbReference>
<dbReference type="FunFam" id="3.20.20.210:FF:000003">
    <property type="entry name" value="5-methyltetrahydropteroyltriglutamate--homocysteine methyltransferase"/>
    <property type="match status" value="1"/>
</dbReference>
<dbReference type="Gene3D" id="3.20.20.210">
    <property type="match status" value="2"/>
</dbReference>
<dbReference type="HAMAP" id="MF_00172">
    <property type="entry name" value="Meth_synth"/>
    <property type="match status" value="1"/>
</dbReference>
<dbReference type="InterPro" id="IPR013215">
    <property type="entry name" value="Cbl-indep_Met_Synth_N"/>
</dbReference>
<dbReference type="InterPro" id="IPR006276">
    <property type="entry name" value="Cobalamin-indep_Met_synthase"/>
</dbReference>
<dbReference type="InterPro" id="IPR002629">
    <property type="entry name" value="Met_Synth_C/arc"/>
</dbReference>
<dbReference type="InterPro" id="IPR038071">
    <property type="entry name" value="UROD/MetE-like_sf"/>
</dbReference>
<dbReference type="NCBIfam" id="TIGR01371">
    <property type="entry name" value="met_syn_B12ind"/>
    <property type="match status" value="1"/>
</dbReference>
<dbReference type="NCBIfam" id="NF003556">
    <property type="entry name" value="PRK05222.1"/>
    <property type="match status" value="1"/>
</dbReference>
<dbReference type="PANTHER" id="PTHR30519">
    <property type="entry name" value="5-METHYLTETRAHYDROPTEROYLTRIGLUTAMATE--HOMOCYSTEINE METHYLTRANSFERASE"/>
    <property type="match status" value="1"/>
</dbReference>
<dbReference type="Pfam" id="PF08267">
    <property type="entry name" value="Meth_synt_1"/>
    <property type="match status" value="1"/>
</dbReference>
<dbReference type="Pfam" id="PF01717">
    <property type="entry name" value="Meth_synt_2"/>
    <property type="match status" value="1"/>
</dbReference>
<dbReference type="PIRSF" id="PIRSF000382">
    <property type="entry name" value="MeTrfase_B12_ind"/>
    <property type="match status" value="1"/>
</dbReference>
<dbReference type="SUPFAM" id="SSF51726">
    <property type="entry name" value="UROD/MetE-like"/>
    <property type="match status" value="2"/>
</dbReference>
<protein>
    <recommendedName>
        <fullName evidence="1">5-methyltetrahydropteroyltriglutamate--homocysteine methyltransferase</fullName>
        <ecNumber evidence="1">2.1.1.14</ecNumber>
    </recommendedName>
    <alternativeName>
        <fullName evidence="1">Cobalamin-independent methionine synthase</fullName>
    </alternativeName>
    <alternativeName>
        <fullName evidence="1">Methionine synthase, vitamin-B12 independent isozyme</fullName>
    </alternativeName>
</protein>
<reference key="1">
    <citation type="journal article" date="2005" name="Proc. Natl. Acad. Sci. U.S.A.">
        <title>Complete genome sequence of Vibrio fischeri: a symbiotic bacterium with pathogenic congeners.</title>
        <authorList>
            <person name="Ruby E.G."/>
            <person name="Urbanowski M."/>
            <person name="Campbell J."/>
            <person name="Dunn A."/>
            <person name="Faini M."/>
            <person name="Gunsalus R."/>
            <person name="Lostroh P."/>
            <person name="Lupp C."/>
            <person name="McCann J."/>
            <person name="Millikan D."/>
            <person name="Schaefer A."/>
            <person name="Stabb E."/>
            <person name="Stevens A."/>
            <person name="Visick K."/>
            <person name="Whistler C."/>
            <person name="Greenberg E.P."/>
        </authorList>
    </citation>
    <scope>NUCLEOTIDE SEQUENCE [LARGE SCALE GENOMIC DNA]</scope>
    <source>
        <strain>ATCC 700601 / ES114</strain>
    </source>
</reference>